<comment type="function">
    <text evidence="1">Component of the cytosolic iron-sulfur (Fe/S) protein assembly (CIA) machinery. Required for maturation of extramitochondrial Fe-S proteins. The Nubp1-Nubp2 heterotetramer forms a Fe-S scaffold complex, mediating the de novo assembly of an Fe-S cluster and its transfer to target apoproteins.</text>
</comment>
<comment type="cofactor">
    <cofactor evidence="1">
        <name>[4Fe-4S] cluster</name>
        <dbReference type="ChEBI" id="CHEBI:49883"/>
    </cofactor>
    <text evidence="1">Binds 4 [4Fe-4S] clusters per heterotetramer. Contains two stable clusters in the N-termini of Nubp1 and two labile, bridging clusters between subunits of the Nubp1-Nubp2 heterotetramer.</text>
</comment>
<comment type="subunit">
    <text evidence="1">Heterotetramer of 2 Nubp1 and 2 Nubp2 chains.</text>
</comment>
<comment type="subcellular location">
    <subcellularLocation>
        <location evidence="1">Cytoplasm</location>
    </subcellularLocation>
</comment>
<comment type="similarity">
    <text evidence="1">Belongs to the Mrp/NBP35 ATP-binding proteins family. NUBP2/CFD1 subfamily.</text>
</comment>
<feature type="chain" id="PRO_0000382719" description="Cytosolic Fe-S cluster assembly factor Nubp2 homolog 1">
    <location>
        <begin position="1"/>
        <end position="260"/>
    </location>
</feature>
<feature type="binding site" evidence="1">
    <location>
        <begin position="14"/>
        <end position="21"/>
    </location>
    <ligand>
        <name>ATP</name>
        <dbReference type="ChEBI" id="CHEBI:30616"/>
    </ligand>
</feature>
<feature type="binding site" evidence="1">
    <location>
        <position position="188"/>
    </location>
    <ligand>
        <name>[4Fe-4S] cluster</name>
        <dbReference type="ChEBI" id="CHEBI:49883"/>
        <note>ligand shared between dimeric partners</note>
    </ligand>
</feature>
<feature type="binding site" evidence="1">
    <location>
        <position position="191"/>
    </location>
    <ligand>
        <name>[4Fe-4S] cluster</name>
        <dbReference type="ChEBI" id="CHEBI:49883"/>
        <note>ligand shared between dimeric partners</note>
    </ligand>
</feature>
<name>NBP21_DROYA</name>
<proteinExistence type="inferred from homology"/>
<accession>B4IUH5</accession>
<organism>
    <name type="scientific">Drosophila yakuba</name>
    <name type="common">Fruit fly</name>
    <dbReference type="NCBI Taxonomy" id="7245"/>
    <lineage>
        <taxon>Eukaryota</taxon>
        <taxon>Metazoa</taxon>
        <taxon>Ecdysozoa</taxon>
        <taxon>Arthropoda</taxon>
        <taxon>Hexapoda</taxon>
        <taxon>Insecta</taxon>
        <taxon>Pterygota</taxon>
        <taxon>Neoptera</taxon>
        <taxon>Endopterygota</taxon>
        <taxon>Diptera</taxon>
        <taxon>Brachycera</taxon>
        <taxon>Muscomorpha</taxon>
        <taxon>Ephydroidea</taxon>
        <taxon>Drosophilidae</taxon>
        <taxon>Drosophila</taxon>
        <taxon>Sophophora</taxon>
    </lineage>
</organism>
<reference key="1">
    <citation type="journal article" date="2007" name="Nature">
        <title>Evolution of genes and genomes on the Drosophila phylogeny.</title>
        <authorList>
            <consortium name="Drosophila 12 genomes consortium"/>
        </authorList>
    </citation>
    <scope>NUCLEOTIDE SEQUENCE [LARGE SCALE GENOMIC DNA]</scope>
    <source>
        <strain>Tai18E2 / Tucson 14021-0261.01</strain>
    </source>
</reference>
<keyword id="KW-0004">4Fe-4S</keyword>
<keyword id="KW-0067">ATP-binding</keyword>
<keyword id="KW-0963">Cytoplasm</keyword>
<keyword id="KW-0408">Iron</keyword>
<keyword id="KW-0411">Iron-sulfur</keyword>
<keyword id="KW-0479">Metal-binding</keyword>
<keyword id="KW-0547">Nucleotide-binding</keyword>
<protein>
    <recommendedName>
        <fullName evidence="1">Cytosolic Fe-S cluster assembly factor Nubp2 homolog 1</fullName>
    </recommendedName>
</protein>
<dbReference type="EMBL" id="CH891909">
    <property type="protein sequence ID" value="EDX00039.1"/>
    <property type="molecule type" value="Genomic_DNA"/>
</dbReference>
<dbReference type="RefSeq" id="XP_002086637.1">
    <property type="nucleotide sequence ID" value="XM_002086601.2"/>
</dbReference>
<dbReference type="SMR" id="B4IUH5"/>
<dbReference type="EnsemblMetazoa" id="FBtr0269759">
    <property type="protein sequence ID" value="FBpp0268251"/>
    <property type="gene ID" value="FBgn0240440"/>
</dbReference>
<dbReference type="EnsemblMetazoa" id="XM_002095400.4">
    <property type="protein sequence ID" value="XP_002095436.2"/>
    <property type="gene ID" value="LOC6534761"/>
</dbReference>
<dbReference type="KEGG" id="dya:Dyak_GE23241"/>
<dbReference type="eggNOG" id="KOG3022">
    <property type="taxonomic scope" value="Eukaryota"/>
</dbReference>
<dbReference type="HOGENOM" id="CLU_024839_0_1_1"/>
<dbReference type="OMA" id="WIPVFAD"/>
<dbReference type="OrthoDB" id="1741334at2759"/>
<dbReference type="PhylomeDB" id="B4IUH5"/>
<dbReference type="Proteomes" id="UP000002282">
    <property type="component" value="Unassembled WGS sequence"/>
</dbReference>
<dbReference type="GO" id="GO:0005829">
    <property type="term" value="C:cytosol"/>
    <property type="evidence" value="ECO:0007669"/>
    <property type="project" value="TreeGrafter"/>
</dbReference>
<dbReference type="GO" id="GO:0051539">
    <property type="term" value="F:4 iron, 4 sulfur cluster binding"/>
    <property type="evidence" value="ECO:0007669"/>
    <property type="project" value="UniProtKB-UniRule"/>
</dbReference>
<dbReference type="GO" id="GO:0005524">
    <property type="term" value="F:ATP binding"/>
    <property type="evidence" value="ECO:0007669"/>
    <property type="project" value="UniProtKB-KW"/>
</dbReference>
<dbReference type="GO" id="GO:0140663">
    <property type="term" value="F:ATP-dependent FeS chaperone activity"/>
    <property type="evidence" value="ECO:0007669"/>
    <property type="project" value="InterPro"/>
</dbReference>
<dbReference type="GO" id="GO:0046872">
    <property type="term" value="F:metal ion binding"/>
    <property type="evidence" value="ECO:0007669"/>
    <property type="project" value="UniProtKB-KW"/>
</dbReference>
<dbReference type="GO" id="GO:0016226">
    <property type="term" value="P:iron-sulfur cluster assembly"/>
    <property type="evidence" value="ECO:0007669"/>
    <property type="project" value="UniProtKB-UniRule"/>
</dbReference>
<dbReference type="CDD" id="cd02037">
    <property type="entry name" value="Mrp_NBP35"/>
    <property type="match status" value="1"/>
</dbReference>
<dbReference type="FunFam" id="3.40.50.300:FF:000796">
    <property type="entry name" value="Cytosolic Fe-S cluster assembly factor NUBP2"/>
    <property type="match status" value="1"/>
</dbReference>
<dbReference type="Gene3D" id="3.40.50.300">
    <property type="entry name" value="P-loop containing nucleotide triphosphate hydrolases"/>
    <property type="match status" value="1"/>
</dbReference>
<dbReference type="HAMAP" id="MF_02040">
    <property type="entry name" value="Mrp_NBP35"/>
    <property type="match status" value="1"/>
</dbReference>
<dbReference type="HAMAP" id="MF_03039">
    <property type="entry name" value="NUBP2"/>
    <property type="match status" value="1"/>
</dbReference>
<dbReference type="InterPro" id="IPR000808">
    <property type="entry name" value="Mrp-like_CS"/>
</dbReference>
<dbReference type="InterPro" id="IPR019591">
    <property type="entry name" value="Mrp/NBP35_ATP-bd"/>
</dbReference>
<dbReference type="InterPro" id="IPR028600">
    <property type="entry name" value="NUBP2/Cfd1_eukaryotes"/>
</dbReference>
<dbReference type="InterPro" id="IPR027417">
    <property type="entry name" value="P-loop_NTPase"/>
</dbReference>
<dbReference type="InterPro" id="IPR033756">
    <property type="entry name" value="YlxH/NBP35"/>
</dbReference>
<dbReference type="PANTHER" id="PTHR23264:SF19">
    <property type="entry name" value="CYTOSOLIC FE-S CLUSTER ASSEMBLY FACTOR NUBP2"/>
    <property type="match status" value="1"/>
</dbReference>
<dbReference type="PANTHER" id="PTHR23264">
    <property type="entry name" value="NUCLEOTIDE-BINDING PROTEIN NBP35 YEAST -RELATED"/>
    <property type="match status" value="1"/>
</dbReference>
<dbReference type="Pfam" id="PF10609">
    <property type="entry name" value="ParA"/>
    <property type="match status" value="1"/>
</dbReference>
<dbReference type="SUPFAM" id="SSF52540">
    <property type="entry name" value="P-loop containing nucleoside triphosphate hydrolases"/>
    <property type="match status" value="1"/>
</dbReference>
<dbReference type="PROSITE" id="PS01215">
    <property type="entry name" value="MRP"/>
    <property type="match status" value="1"/>
</dbReference>
<evidence type="ECO:0000255" key="1">
    <source>
        <dbReference type="HAMAP-Rule" id="MF_03039"/>
    </source>
</evidence>
<sequence>MLEKVKNIIVVLSGKGGVGKSTVSTQLSLALRKNGFKVGLLDIDLCGPSVPYLLGLEGRDIFQCDEGWVPVYTDESQTLAVMSIGFLLKNREDPVIWRGPKKTMMIRQFLTDVRWDELDYLIIDTPPGTSDEHITVMECLKEVGCHGAIIVTTPQEVALDDVRKEITFCKKTGINILGIVENMSGFVCPHCTSCTNIFSSNGGASLANYAQVPHLGTLPIDPRVGVLAGSTTSVLDELPDSTTAEVLTHIVEKLKTIFVS</sequence>
<gene>
    <name type="ORF">GE23241</name>
</gene>